<reference key="1">
    <citation type="journal article" date="2011" name="J. Bacteriol.">
        <title>Comparative genomics of 28 Salmonella enterica isolates: evidence for CRISPR-mediated adaptive sublineage evolution.</title>
        <authorList>
            <person name="Fricke W.F."/>
            <person name="Mammel M.K."/>
            <person name="McDermott P.F."/>
            <person name="Tartera C."/>
            <person name="White D.G."/>
            <person name="Leclerc J.E."/>
            <person name="Ravel J."/>
            <person name="Cebula T.A."/>
        </authorList>
    </citation>
    <scope>NUCLEOTIDE SEQUENCE [LARGE SCALE GENOMIC DNA]</scope>
    <source>
        <strain>SL476</strain>
    </source>
</reference>
<evidence type="ECO:0000255" key="1">
    <source>
        <dbReference type="HAMAP-Rule" id="MF_01631"/>
    </source>
</evidence>
<organism>
    <name type="scientific">Salmonella heidelberg (strain SL476)</name>
    <dbReference type="NCBI Taxonomy" id="454169"/>
    <lineage>
        <taxon>Bacteria</taxon>
        <taxon>Pseudomonadati</taxon>
        <taxon>Pseudomonadota</taxon>
        <taxon>Gammaproteobacteria</taxon>
        <taxon>Enterobacterales</taxon>
        <taxon>Enterobacteriaceae</taxon>
        <taxon>Salmonella</taxon>
    </lineage>
</organism>
<comment type="function">
    <text evidence="1">Catalyzes the last two sequential reactions in the de novo biosynthetic pathway for UDP-N-acetylglucosamine (UDP-GlcNAc). The C-terminal domain catalyzes the transfer of acetyl group from acetyl coenzyme A to glucosamine-1-phosphate (GlcN-1-P) to produce N-acetylglucosamine-1-phosphate (GlcNAc-1-P), which is converted into UDP-GlcNAc by the transfer of uridine 5-monophosphate (from uridine 5-triphosphate), a reaction catalyzed by the N-terminal domain.</text>
</comment>
<comment type="catalytic activity">
    <reaction evidence="1">
        <text>alpha-D-glucosamine 1-phosphate + acetyl-CoA = N-acetyl-alpha-D-glucosamine 1-phosphate + CoA + H(+)</text>
        <dbReference type="Rhea" id="RHEA:13725"/>
        <dbReference type="ChEBI" id="CHEBI:15378"/>
        <dbReference type="ChEBI" id="CHEBI:57287"/>
        <dbReference type="ChEBI" id="CHEBI:57288"/>
        <dbReference type="ChEBI" id="CHEBI:57776"/>
        <dbReference type="ChEBI" id="CHEBI:58516"/>
        <dbReference type="EC" id="2.3.1.157"/>
    </reaction>
</comment>
<comment type="catalytic activity">
    <reaction evidence="1">
        <text>N-acetyl-alpha-D-glucosamine 1-phosphate + UTP + H(+) = UDP-N-acetyl-alpha-D-glucosamine + diphosphate</text>
        <dbReference type="Rhea" id="RHEA:13509"/>
        <dbReference type="ChEBI" id="CHEBI:15378"/>
        <dbReference type="ChEBI" id="CHEBI:33019"/>
        <dbReference type="ChEBI" id="CHEBI:46398"/>
        <dbReference type="ChEBI" id="CHEBI:57705"/>
        <dbReference type="ChEBI" id="CHEBI:57776"/>
        <dbReference type="EC" id="2.7.7.23"/>
    </reaction>
</comment>
<comment type="cofactor">
    <cofactor evidence="1">
        <name>Mg(2+)</name>
        <dbReference type="ChEBI" id="CHEBI:18420"/>
    </cofactor>
    <text evidence="1">Binds 1 Mg(2+) ion per subunit.</text>
</comment>
<comment type="pathway">
    <text evidence="1">Nucleotide-sugar biosynthesis; UDP-N-acetyl-alpha-D-glucosamine biosynthesis; N-acetyl-alpha-D-glucosamine 1-phosphate from alpha-D-glucosamine 6-phosphate (route II): step 2/2.</text>
</comment>
<comment type="pathway">
    <text evidence="1">Nucleotide-sugar biosynthesis; UDP-N-acetyl-alpha-D-glucosamine biosynthesis; UDP-N-acetyl-alpha-D-glucosamine from N-acetyl-alpha-D-glucosamine 1-phosphate: step 1/1.</text>
</comment>
<comment type="pathway">
    <text evidence="1">Bacterial outer membrane biogenesis; LPS lipid A biosynthesis.</text>
</comment>
<comment type="subunit">
    <text evidence="1">Homotrimer.</text>
</comment>
<comment type="subcellular location">
    <subcellularLocation>
        <location evidence="1">Cytoplasm</location>
    </subcellularLocation>
</comment>
<comment type="similarity">
    <text evidence="1">In the N-terminal section; belongs to the N-acetylglucosamine-1-phosphate uridyltransferase family.</text>
</comment>
<comment type="similarity">
    <text evidence="1">In the C-terminal section; belongs to the transferase hexapeptide repeat family.</text>
</comment>
<keyword id="KW-0012">Acyltransferase</keyword>
<keyword id="KW-0133">Cell shape</keyword>
<keyword id="KW-0961">Cell wall biogenesis/degradation</keyword>
<keyword id="KW-0963">Cytoplasm</keyword>
<keyword id="KW-0460">Magnesium</keyword>
<keyword id="KW-0479">Metal-binding</keyword>
<keyword id="KW-0511">Multifunctional enzyme</keyword>
<keyword id="KW-0548">Nucleotidyltransferase</keyword>
<keyword id="KW-0573">Peptidoglycan synthesis</keyword>
<keyword id="KW-0677">Repeat</keyword>
<keyword id="KW-0808">Transferase</keyword>
<accession>B4TAW9</accession>
<proteinExistence type="inferred from homology"/>
<feature type="chain" id="PRO_1000186484" description="Bifunctional protein GlmU">
    <location>
        <begin position="1"/>
        <end position="456"/>
    </location>
</feature>
<feature type="region of interest" description="Pyrophosphorylase" evidence="1">
    <location>
        <begin position="1"/>
        <end position="229"/>
    </location>
</feature>
<feature type="region of interest" description="Linker" evidence="1">
    <location>
        <begin position="230"/>
        <end position="250"/>
    </location>
</feature>
<feature type="region of interest" description="N-acetyltransferase" evidence="1">
    <location>
        <begin position="251"/>
        <end position="456"/>
    </location>
</feature>
<feature type="active site" description="Proton acceptor" evidence="1">
    <location>
        <position position="363"/>
    </location>
</feature>
<feature type="binding site" evidence="1">
    <location>
        <begin position="11"/>
        <end position="14"/>
    </location>
    <ligand>
        <name>UDP-N-acetyl-alpha-D-glucosamine</name>
        <dbReference type="ChEBI" id="CHEBI:57705"/>
    </ligand>
</feature>
<feature type="binding site" evidence="1">
    <location>
        <position position="25"/>
    </location>
    <ligand>
        <name>UDP-N-acetyl-alpha-D-glucosamine</name>
        <dbReference type="ChEBI" id="CHEBI:57705"/>
    </ligand>
</feature>
<feature type="binding site" evidence="1">
    <location>
        <position position="76"/>
    </location>
    <ligand>
        <name>UDP-N-acetyl-alpha-D-glucosamine</name>
        <dbReference type="ChEBI" id="CHEBI:57705"/>
    </ligand>
</feature>
<feature type="binding site" evidence="1">
    <location>
        <begin position="81"/>
        <end position="82"/>
    </location>
    <ligand>
        <name>UDP-N-acetyl-alpha-D-glucosamine</name>
        <dbReference type="ChEBI" id="CHEBI:57705"/>
    </ligand>
</feature>
<feature type="binding site" evidence="1">
    <location>
        <begin position="103"/>
        <end position="105"/>
    </location>
    <ligand>
        <name>UDP-N-acetyl-alpha-D-glucosamine</name>
        <dbReference type="ChEBI" id="CHEBI:57705"/>
    </ligand>
</feature>
<feature type="binding site" evidence="1">
    <location>
        <position position="105"/>
    </location>
    <ligand>
        <name>Mg(2+)</name>
        <dbReference type="ChEBI" id="CHEBI:18420"/>
    </ligand>
</feature>
<feature type="binding site" evidence="1">
    <location>
        <position position="140"/>
    </location>
    <ligand>
        <name>UDP-N-acetyl-alpha-D-glucosamine</name>
        <dbReference type="ChEBI" id="CHEBI:57705"/>
    </ligand>
</feature>
<feature type="binding site" evidence="1">
    <location>
        <position position="154"/>
    </location>
    <ligand>
        <name>UDP-N-acetyl-alpha-D-glucosamine</name>
        <dbReference type="ChEBI" id="CHEBI:57705"/>
    </ligand>
</feature>
<feature type="binding site" evidence="1">
    <location>
        <position position="169"/>
    </location>
    <ligand>
        <name>UDP-N-acetyl-alpha-D-glucosamine</name>
        <dbReference type="ChEBI" id="CHEBI:57705"/>
    </ligand>
</feature>
<feature type="binding site" evidence="1">
    <location>
        <position position="227"/>
    </location>
    <ligand>
        <name>Mg(2+)</name>
        <dbReference type="ChEBI" id="CHEBI:18420"/>
    </ligand>
</feature>
<feature type="binding site" evidence="1">
    <location>
        <position position="227"/>
    </location>
    <ligand>
        <name>UDP-N-acetyl-alpha-D-glucosamine</name>
        <dbReference type="ChEBI" id="CHEBI:57705"/>
    </ligand>
</feature>
<feature type="binding site" evidence="1">
    <location>
        <position position="333"/>
    </location>
    <ligand>
        <name>UDP-N-acetyl-alpha-D-glucosamine</name>
        <dbReference type="ChEBI" id="CHEBI:57705"/>
    </ligand>
</feature>
<feature type="binding site" evidence="1">
    <location>
        <position position="351"/>
    </location>
    <ligand>
        <name>UDP-N-acetyl-alpha-D-glucosamine</name>
        <dbReference type="ChEBI" id="CHEBI:57705"/>
    </ligand>
</feature>
<feature type="binding site" evidence="1">
    <location>
        <position position="366"/>
    </location>
    <ligand>
        <name>UDP-N-acetyl-alpha-D-glucosamine</name>
        <dbReference type="ChEBI" id="CHEBI:57705"/>
    </ligand>
</feature>
<feature type="binding site" evidence="1">
    <location>
        <position position="377"/>
    </location>
    <ligand>
        <name>UDP-N-acetyl-alpha-D-glucosamine</name>
        <dbReference type="ChEBI" id="CHEBI:57705"/>
    </ligand>
</feature>
<feature type="binding site" evidence="1">
    <location>
        <position position="380"/>
    </location>
    <ligand>
        <name>acetyl-CoA</name>
        <dbReference type="ChEBI" id="CHEBI:57288"/>
    </ligand>
</feature>
<feature type="binding site" evidence="1">
    <location>
        <begin position="386"/>
        <end position="387"/>
    </location>
    <ligand>
        <name>acetyl-CoA</name>
        <dbReference type="ChEBI" id="CHEBI:57288"/>
    </ligand>
</feature>
<feature type="binding site" evidence="1">
    <location>
        <position position="405"/>
    </location>
    <ligand>
        <name>acetyl-CoA</name>
        <dbReference type="ChEBI" id="CHEBI:57288"/>
    </ligand>
</feature>
<feature type="binding site" evidence="1">
    <location>
        <position position="423"/>
    </location>
    <ligand>
        <name>acetyl-CoA</name>
        <dbReference type="ChEBI" id="CHEBI:57288"/>
    </ligand>
</feature>
<feature type="binding site" evidence="1">
    <location>
        <position position="440"/>
    </location>
    <ligand>
        <name>acetyl-CoA</name>
        <dbReference type="ChEBI" id="CHEBI:57288"/>
    </ligand>
</feature>
<sequence>MLNSAMSVVILAAGKGTRMYSDIPKVLHTLAGKPMVQHVIDAATKLGAAQVHLVYGHGGELLKQTLKDDKLNWVLQAEQLGTGHAMQQAAPFFSDDEDILMLYGDVPLISVETLQRLRDAKPQGGIGLLTVKLDDPSGYGRITRENGKVTGIVEHKDATDEQRQIQEINTGILIANGADMKRWLSKLTNNNAQGEYYITDIIALAYQEGREIAAVHPARISETDGVNNRLQLSRLERIYQAEQAEKLLLSGVMLRDPARFDLRGTLHCGMDVEIDANVIIEGYVTLGHRVKIGAGCIIKNSVIGDDCEISPYSVVEDAHLEAACTIGPFARLRPGAELLAGAHVGNFVEMKKARLGKGSKAGHLTYLGDAEIGDNVNIGAGTITCNYDGANKFKTVIGDDVFVGSDTQLVAPVTVGKGATIAAGTTVTRNVADNELVLSRVPQVHKQGWQRPVKKK</sequence>
<gene>
    <name evidence="1" type="primary">glmU</name>
    <name type="ordered locus">SeHA_C4193</name>
</gene>
<dbReference type="EC" id="2.7.7.23" evidence="1"/>
<dbReference type="EC" id="2.3.1.157" evidence="1"/>
<dbReference type="EMBL" id="CP001120">
    <property type="protein sequence ID" value="ACF69549.1"/>
    <property type="molecule type" value="Genomic_DNA"/>
</dbReference>
<dbReference type="RefSeq" id="WP_000934854.1">
    <property type="nucleotide sequence ID" value="NC_011083.1"/>
</dbReference>
<dbReference type="SMR" id="B4TAW9"/>
<dbReference type="KEGG" id="seh:SeHA_C4193"/>
<dbReference type="HOGENOM" id="CLU_029499_15_2_6"/>
<dbReference type="UniPathway" id="UPA00113">
    <property type="reaction ID" value="UER00532"/>
</dbReference>
<dbReference type="UniPathway" id="UPA00113">
    <property type="reaction ID" value="UER00533"/>
</dbReference>
<dbReference type="UniPathway" id="UPA00973"/>
<dbReference type="Proteomes" id="UP000001866">
    <property type="component" value="Chromosome"/>
</dbReference>
<dbReference type="GO" id="GO:0005737">
    <property type="term" value="C:cytoplasm"/>
    <property type="evidence" value="ECO:0007669"/>
    <property type="project" value="UniProtKB-SubCell"/>
</dbReference>
<dbReference type="GO" id="GO:0016020">
    <property type="term" value="C:membrane"/>
    <property type="evidence" value="ECO:0007669"/>
    <property type="project" value="GOC"/>
</dbReference>
<dbReference type="GO" id="GO:0019134">
    <property type="term" value="F:glucosamine-1-phosphate N-acetyltransferase activity"/>
    <property type="evidence" value="ECO:0007669"/>
    <property type="project" value="UniProtKB-UniRule"/>
</dbReference>
<dbReference type="GO" id="GO:0000287">
    <property type="term" value="F:magnesium ion binding"/>
    <property type="evidence" value="ECO:0007669"/>
    <property type="project" value="UniProtKB-UniRule"/>
</dbReference>
<dbReference type="GO" id="GO:0003977">
    <property type="term" value="F:UDP-N-acetylglucosamine diphosphorylase activity"/>
    <property type="evidence" value="ECO:0007669"/>
    <property type="project" value="UniProtKB-UniRule"/>
</dbReference>
<dbReference type="GO" id="GO:0000902">
    <property type="term" value="P:cell morphogenesis"/>
    <property type="evidence" value="ECO:0007669"/>
    <property type="project" value="UniProtKB-UniRule"/>
</dbReference>
<dbReference type="GO" id="GO:0071555">
    <property type="term" value="P:cell wall organization"/>
    <property type="evidence" value="ECO:0007669"/>
    <property type="project" value="UniProtKB-KW"/>
</dbReference>
<dbReference type="GO" id="GO:0009245">
    <property type="term" value="P:lipid A biosynthetic process"/>
    <property type="evidence" value="ECO:0007669"/>
    <property type="project" value="UniProtKB-UniRule"/>
</dbReference>
<dbReference type="GO" id="GO:0009252">
    <property type="term" value="P:peptidoglycan biosynthetic process"/>
    <property type="evidence" value="ECO:0007669"/>
    <property type="project" value="UniProtKB-UniRule"/>
</dbReference>
<dbReference type="GO" id="GO:0008360">
    <property type="term" value="P:regulation of cell shape"/>
    <property type="evidence" value="ECO:0007669"/>
    <property type="project" value="UniProtKB-KW"/>
</dbReference>
<dbReference type="GO" id="GO:0006048">
    <property type="term" value="P:UDP-N-acetylglucosamine biosynthetic process"/>
    <property type="evidence" value="ECO:0007669"/>
    <property type="project" value="UniProtKB-UniPathway"/>
</dbReference>
<dbReference type="CDD" id="cd02540">
    <property type="entry name" value="GT2_GlmU_N_bac"/>
    <property type="match status" value="1"/>
</dbReference>
<dbReference type="CDD" id="cd03353">
    <property type="entry name" value="LbH_GlmU_C"/>
    <property type="match status" value="1"/>
</dbReference>
<dbReference type="FunFam" id="2.160.10.10:FF:000011">
    <property type="entry name" value="Bifunctional protein GlmU"/>
    <property type="match status" value="1"/>
</dbReference>
<dbReference type="FunFam" id="3.90.550.10:FF:000006">
    <property type="entry name" value="Bifunctional protein GlmU"/>
    <property type="match status" value="1"/>
</dbReference>
<dbReference type="Gene3D" id="2.160.10.10">
    <property type="entry name" value="Hexapeptide repeat proteins"/>
    <property type="match status" value="1"/>
</dbReference>
<dbReference type="Gene3D" id="3.90.550.10">
    <property type="entry name" value="Spore Coat Polysaccharide Biosynthesis Protein SpsA, Chain A"/>
    <property type="match status" value="1"/>
</dbReference>
<dbReference type="HAMAP" id="MF_01631">
    <property type="entry name" value="GlmU"/>
    <property type="match status" value="1"/>
</dbReference>
<dbReference type="InterPro" id="IPR005882">
    <property type="entry name" value="Bifunctional_GlmU"/>
</dbReference>
<dbReference type="InterPro" id="IPR050065">
    <property type="entry name" value="GlmU-like"/>
</dbReference>
<dbReference type="InterPro" id="IPR038009">
    <property type="entry name" value="GlmU_C_LbH"/>
</dbReference>
<dbReference type="InterPro" id="IPR001451">
    <property type="entry name" value="Hexapep"/>
</dbReference>
<dbReference type="InterPro" id="IPR018357">
    <property type="entry name" value="Hexapep_transf_CS"/>
</dbReference>
<dbReference type="InterPro" id="IPR025877">
    <property type="entry name" value="MobA-like_NTP_Trfase"/>
</dbReference>
<dbReference type="InterPro" id="IPR029044">
    <property type="entry name" value="Nucleotide-diphossugar_trans"/>
</dbReference>
<dbReference type="InterPro" id="IPR011004">
    <property type="entry name" value="Trimer_LpxA-like_sf"/>
</dbReference>
<dbReference type="NCBIfam" id="TIGR01173">
    <property type="entry name" value="glmU"/>
    <property type="match status" value="1"/>
</dbReference>
<dbReference type="NCBIfam" id="NF006986">
    <property type="entry name" value="PRK09451.1"/>
    <property type="match status" value="1"/>
</dbReference>
<dbReference type="PANTHER" id="PTHR43584:SF3">
    <property type="entry name" value="BIFUNCTIONAL PROTEIN GLMU"/>
    <property type="match status" value="1"/>
</dbReference>
<dbReference type="PANTHER" id="PTHR43584">
    <property type="entry name" value="NUCLEOTIDYL TRANSFERASE"/>
    <property type="match status" value="1"/>
</dbReference>
<dbReference type="Pfam" id="PF00132">
    <property type="entry name" value="Hexapep"/>
    <property type="match status" value="1"/>
</dbReference>
<dbReference type="Pfam" id="PF12804">
    <property type="entry name" value="NTP_transf_3"/>
    <property type="match status" value="1"/>
</dbReference>
<dbReference type="SUPFAM" id="SSF53448">
    <property type="entry name" value="Nucleotide-diphospho-sugar transferases"/>
    <property type="match status" value="1"/>
</dbReference>
<dbReference type="SUPFAM" id="SSF51161">
    <property type="entry name" value="Trimeric LpxA-like enzymes"/>
    <property type="match status" value="1"/>
</dbReference>
<dbReference type="PROSITE" id="PS00101">
    <property type="entry name" value="HEXAPEP_TRANSFERASES"/>
    <property type="match status" value="1"/>
</dbReference>
<protein>
    <recommendedName>
        <fullName evidence="1">Bifunctional protein GlmU</fullName>
    </recommendedName>
    <domain>
        <recommendedName>
            <fullName evidence="1">UDP-N-acetylglucosamine pyrophosphorylase</fullName>
            <ecNumber evidence="1">2.7.7.23</ecNumber>
        </recommendedName>
        <alternativeName>
            <fullName evidence="1">N-acetylglucosamine-1-phosphate uridyltransferase</fullName>
        </alternativeName>
    </domain>
    <domain>
        <recommendedName>
            <fullName evidence="1">Glucosamine-1-phosphate N-acetyltransferase</fullName>
            <ecNumber evidence="1">2.3.1.157</ecNumber>
        </recommendedName>
    </domain>
</protein>
<name>GLMU_SALHS</name>